<sequence>MMAPKSLQTGLLILLLAKLKLAWGMTLVPRQVTCDYEAAASSGDTCTSFAAEWGLTEETFASLNPSAACPSLVAGQNYCMVGTISAASTTSSSSSTTSSSTTSSSTTSSSTTSSSTTTSSFTTTTASETTSTAANGVTTPMPVQSGMIDSCSKFDLIKSGDTCASIASTYNIDLSSFYSWNPAVGSSCAYLDVGYYVCVDAVPSPVQSGITESCSKFDLVESGDTCASIVSTYNIPLSSFYAWNPAVGSSCAYLDLGYYVCVGTDSSTVATSTTSAGNGITTPTPDEPGMVSDCTKFWLVGSDDTCTSIASSEDITVADIEKWNPKVGSTCTDVWLGDYICVGV</sequence>
<reference key="1">
    <citation type="journal article" date="2015" name="Mol. Plant Microbe Interact.">
        <title>Genome, transcriptome, and functional analyses of Penicillium expansum provide new insights into secondary metabolism and pathogenicity.</title>
        <authorList>
            <person name="Ballester A.R."/>
            <person name="Marcet-Houben M."/>
            <person name="Levin E."/>
            <person name="Sela N."/>
            <person name="Selma-Lazaro C."/>
            <person name="Carmona L."/>
            <person name="Wisniewski M."/>
            <person name="Droby S."/>
            <person name="Gonzalez-Candelas L."/>
            <person name="Gabaldon T."/>
        </authorList>
    </citation>
    <scope>NUCLEOTIDE SEQUENCE [LARGE SCALE GENOMIC DNA]</scope>
    <source>
        <strain>MD-8</strain>
    </source>
</reference>
<reference key="2">
    <citation type="journal article" date="2017" name="PLoS ONE">
        <title>Identification and characterization of LysM effectors in Penicillium expansum.</title>
        <authorList>
            <person name="Levin E."/>
            <person name="Ballester A.R."/>
            <person name="Raphael G."/>
            <person name="Feigenberg O."/>
            <person name="Liu Y."/>
            <person name="Norelli J."/>
            <person name="Gonzalez-Candelas L."/>
            <person name="Ma J."/>
            <person name="Dardick C."/>
            <person name="Wisniewski M."/>
            <person name="Droby S."/>
        </authorList>
    </citation>
    <scope>FUNCTION</scope>
    <scope>INDUCTION</scope>
    <scope>DOMAIN</scope>
    <scope>DISRUPTION PHENOTYPE</scope>
</reference>
<name>LYSM2_PENEN</name>
<accession>A0A0A2JVC2</accession>
<comment type="function">
    <text evidence="7">Might have a role in sequestration of chitin oligosaccharides (breakdown products of fungal cell walls that are released during invasion and act as triggers of host immunity) to dampen host defense.</text>
</comment>
<comment type="induction">
    <text evidence="4">Highly expressed during the infection and development of decay of apple fruit.</text>
</comment>
<comment type="domain">
    <text evidence="7">The LysM (lysin motif) domains are small globular domains involved in binding chitin in eukaryotes. LysM2 contains 4 LysM domains.</text>
</comment>
<comment type="disruption phenotype">
    <text evidence="4">Does not affect radial growth rate and colony morphology, nor lesion development on apples.</text>
</comment>
<comment type="miscellaneous">
    <text evidence="6">In plants, chitin acts as a microbe-associated molecular pattern (MAMP) that is recognized by lysin motif (LysM)-containing plant cell surface-localized pattern recognition receptors (PRRs) that activate a plethora of downstream immune responses.</text>
</comment>
<comment type="similarity">
    <text evidence="6">Belongs to the secreted LysM effector family.</text>
</comment>
<keyword id="KW-0147">Chitin-binding</keyword>
<keyword id="KW-1185">Reference proteome</keyword>
<keyword id="KW-0677">Repeat</keyword>
<keyword id="KW-0732">Signal</keyword>
<keyword id="KW-0843">Virulence</keyword>
<protein>
    <recommendedName>
        <fullName evidence="5">Secreted LysM effector LysM2</fullName>
    </recommendedName>
    <alternativeName>
        <fullName evidence="5">LysM domain-containing protein 2</fullName>
    </alternativeName>
</protein>
<gene>
    <name evidence="5" type="primary">LysM2</name>
    <name type="ORF">PEX2_091440</name>
</gene>
<organism>
    <name type="scientific">Penicillium expansum</name>
    <name type="common">Blue mold rot fungus</name>
    <dbReference type="NCBI Taxonomy" id="27334"/>
    <lineage>
        <taxon>Eukaryota</taxon>
        <taxon>Fungi</taxon>
        <taxon>Dikarya</taxon>
        <taxon>Ascomycota</taxon>
        <taxon>Pezizomycotina</taxon>
        <taxon>Eurotiomycetes</taxon>
        <taxon>Eurotiomycetidae</taxon>
        <taxon>Eurotiales</taxon>
        <taxon>Aspergillaceae</taxon>
        <taxon>Penicillium</taxon>
    </lineage>
</organism>
<feature type="signal peptide" evidence="1">
    <location>
        <begin position="1"/>
        <end position="24"/>
    </location>
</feature>
<feature type="chain" id="PRO_5002000913" description="Secreted LysM effector LysM2">
    <location>
        <begin position="25"/>
        <end position="344"/>
    </location>
</feature>
<feature type="domain" description="LysM 1" evidence="2">
    <location>
        <begin position="36"/>
        <end position="80"/>
    </location>
</feature>
<feature type="domain" description="LysM 2" evidence="2">
    <location>
        <begin position="153"/>
        <end position="199"/>
    </location>
</feature>
<feature type="domain" description="LysM 3" evidence="2">
    <location>
        <begin position="216"/>
        <end position="262"/>
    </location>
</feature>
<feature type="domain" description="LysM 4" evidence="2">
    <location>
        <begin position="296"/>
        <end position="342"/>
    </location>
</feature>
<feature type="region of interest" description="Disordered" evidence="3">
    <location>
        <begin position="88"/>
        <end position="141"/>
    </location>
</feature>
<feature type="compositionally biased region" description="Low complexity" evidence="3">
    <location>
        <begin position="88"/>
        <end position="134"/>
    </location>
</feature>
<evidence type="ECO:0000255" key="1"/>
<evidence type="ECO:0000255" key="2">
    <source>
        <dbReference type="PROSITE-ProRule" id="PRU01118"/>
    </source>
</evidence>
<evidence type="ECO:0000256" key="3">
    <source>
        <dbReference type="SAM" id="MobiDB-lite"/>
    </source>
</evidence>
<evidence type="ECO:0000269" key="4">
    <source>
    </source>
</evidence>
<evidence type="ECO:0000303" key="5">
    <source>
    </source>
</evidence>
<evidence type="ECO:0000305" key="6"/>
<evidence type="ECO:0000305" key="7">
    <source>
    </source>
</evidence>
<dbReference type="EMBL" id="JQFZ01000111">
    <property type="protein sequence ID" value="KGO58766.1"/>
    <property type="molecule type" value="Genomic_DNA"/>
</dbReference>
<dbReference type="RefSeq" id="XP_016600130.1">
    <property type="nucleotide sequence ID" value="XM_016746414.1"/>
</dbReference>
<dbReference type="SMR" id="A0A0A2JVC2"/>
<dbReference type="STRING" id="27334.A0A0A2JVC2"/>
<dbReference type="GeneID" id="27681834"/>
<dbReference type="VEuPathDB" id="FungiDB:PEXP_069670"/>
<dbReference type="HOGENOM" id="CLU_010591_8_0_1"/>
<dbReference type="PHI-base" id="PHI:7665"/>
<dbReference type="Proteomes" id="UP000030143">
    <property type="component" value="Unassembled WGS sequence"/>
</dbReference>
<dbReference type="GO" id="GO:0008061">
    <property type="term" value="F:chitin binding"/>
    <property type="evidence" value="ECO:0007669"/>
    <property type="project" value="UniProtKB-KW"/>
</dbReference>
<dbReference type="CDD" id="cd00118">
    <property type="entry name" value="LysM"/>
    <property type="match status" value="4"/>
</dbReference>
<dbReference type="Gene3D" id="3.10.350.10">
    <property type="entry name" value="LysM domain"/>
    <property type="match status" value="4"/>
</dbReference>
<dbReference type="InterPro" id="IPR052210">
    <property type="entry name" value="LysM1-like"/>
</dbReference>
<dbReference type="InterPro" id="IPR018392">
    <property type="entry name" value="LysM_dom"/>
</dbReference>
<dbReference type="InterPro" id="IPR036779">
    <property type="entry name" value="LysM_dom_sf"/>
</dbReference>
<dbReference type="PANTHER" id="PTHR34997">
    <property type="entry name" value="AM15"/>
    <property type="match status" value="1"/>
</dbReference>
<dbReference type="PANTHER" id="PTHR34997:SF1">
    <property type="entry name" value="PEPTIDOGLYCAN-BINDING LYSIN DOMAIN"/>
    <property type="match status" value="1"/>
</dbReference>
<dbReference type="Pfam" id="PF01476">
    <property type="entry name" value="LysM"/>
    <property type="match status" value="4"/>
</dbReference>
<dbReference type="SMART" id="SM00257">
    <property type="entry name" value="LysM"/>
    <property type="match status" value="4"/>
</dbReference>
<dbReference type="SUPFAM" id="SSF54106">
    <property type="entry name" value="LysM domain"/>
    <property type="match status" value="3"/>
</dbReference>
<dbReference type="PROSITE" id="PS51782">
    <property type="entry name" value="LYSM"/>
    <property type="match status" value="4"/>
</dbReference>
<proteinExistence type="evidence at transcript level"/>